<accession>Q86523</accession>
<proteinExistence type="evidence at protein level"/>
<comment type="function">
    <text evidence="1">Encapsidates the genome, protecting it from nucleases. If expressed without protein P it binds non-specifically RNA and therefore can bind it's own mRNA. Interaction with protein P abolishes any non-specific RNA binding, and prevents phosphorylation. The soluble N-P complex encapsidates specifically the genomic RNA, with protein N protecting the genome like a pearl necklace. The encapsidated genomic RNA is termed the nucleocapsid (NC) and serves as template for viral transcription and replication. Protein N binds protein P in the NC through a different interaction, and can be phosphorylated. Subsequent viral replication is dependent on intracellular concentration of newly synthesized protein N. During replication, encapsidation by protein N is coupled to RNA synthesis and all replicative products are resistant to nucleases (By similarity).</text>
</comment>
<comment type="subunit">
    <text evidence="1">Homomultimerizes to form the nucleocapsid. Binds to viral genomic RNA. Interacts with movement protein 3 (By similarity).</text>
</comment>
<comment type="subcellular location">
    <subcellularLocation>
        <location>Virion</location>
    </subcellularLocation>
    <subcellularLocation>
        <location evidence="1">Host cytoplasm</location>
    </subcellularLocation>
</comment>
<comment type="similarity">
    <text evidence="3">Belongs to the nucleorhabdovirus nucleocapsid protein family.</text>
</comment>
<feature type="chain" id="PRO_0000299202" description="Nucleoprotein">
    <location>
        <begin position="1"/>
        <end position="521"/>
    </location>
</feature>
<feature type="region of interest" description="Disordered" evidence="2">
    <location>
        <begin position="406"/>
        <end position="505"/>
    </location>
</feature>
<feature type="compositionally biased region" description="Basic and acidic residues" evidence="2">
    <location>
        <begin position="429"/>
        <end position="440"/>
    </location>
</feature>
<feature type="compositionally biased region" description="Basic residues" evidence="2">
    <location>
        <begin position="441"/>
        <end position="453"/>
    </location>
</feature>
<feature type="compositionally biased region" description="Polar residues" evidence="2">
    <location>
        <begin position="454"/>
        <end position="464"/>
    </location>
</feature>
<feature type="compositionally biased region" description="Polar residues" evidence="2">
    <location>
        <begin position="479"/>
        <end position="488"/>
    </location>
</feature>
<feature type="compositionally biased region" description="Basic residues" evidence="2">
    <location>
        <begin position="493"/>
        <end position="504"/>
    </location>
</feature>
<organismHost>
    <name type="scientific">Oryza sativa</name>
    <name type="common">Rice</name>
    <dbReference type="NCBI Taxonomy" id="4530"/>
</organismHost>
<sequence>MANDNVSDYANAAPFARFANLQNRETLNPIGNEAKEIPYNRDQYLTWLAEGKLFQIGALTDAEIVAAWTTIKTAMGNNTFSETHMRSIVKIACNLRGITPGSTPLLVTYNPPQSATWAPAPSTDAIYSGTPVAGVIIPQNTGAGGEDTETEASKARAIAFICCYLLRFIVKTEEHLTNSLGNLKLQYSRLYSAQSATLSNWNPSNTWASRVKLGFDTYLTLRATVAYNIASADALLVPENVNYGLCRMLVFQHLELSGLQLYKMAMTLIAHFKLIEPNKFLSWIYDPLSEASIDQIYKIAVNYDNVNSKTHKHWKYAKLARGQYWLNTTVKRNQFLAYILADLELKYGLAGKSDYSSPKRMKALSGMPVERMTEAETISKAVEQMYTAIESAKRVDAGAAYRLAKKLGPPRANAHSRRKEPNNSRQHRDKQPNSKQQGRDKRNKHQVLGRHSKPQAQGPPNKQQDLGPHNNKPKEASRPPQQDRQQLAQPWRLTRRQRGARGHRTQTLSGMFCKGTCQCIQ</sequence>
<organism>
    <name type="scientific">Rice yellow stunt virus</name>
    <name type="common">RYSV</name>
    <name type="synonym">Rice transitory yellowing virus</name>
    <dbReference type="NCBI Taxonomy" id="59380"/>
    <lineage>
        <taxon>Viruses</taxon>
        <taxon>Riboviria</taxon>
        <taxon>Orthornavirae</taxon>
        <taxon>Negarnaviricota</taxon>
        <taxon>Haploviricotina</taxon>
        <taxon>Monjiviricetes</taxon>
        <taxon>Mononegavirales</taxon>
        <taxon>Rhabdoviridae</taxon>
        <taxon>Betarhabdovirinae</taxon>
        <taxon>Alphanucleorhabdovirus</taxon>
        <taxon>Alphanucleorhabdovirus oryzae</taxon>
    </lineage>
</organism>
<name>NCAP_RYSV</name>
<reference key="1">
    <citation type="journal article" date="1994" name="Virology">
        <title>Structure of the nucleocapsid protein gene of rice yellow stunt rhabdovirus.</title>
        <authorList>
            <person name="Fang R.X."/>
            <person name="Wang Q."/>
            <person name="Xu B.Y."/>
            <person name="Pang Z."/>
            <person name="Zhu H.T."/>
            <person name="Mang K.Q."/>
            <person name="Gao D.M."/>
            <person name="Qin W.S."/>
            <person name="Chua N.H."/>
        </authorList>
    </citation>
    <scope>NUCLEOTIDE SEQUENCE [MRNA]</scope>
</reference>
<reference key="2">
    <citation type="journal article" date="2003" name="J. Gen. Virol.">
        <title>Novel structure of the genome of Rice yellow stunt virus: identification of the gene 6-encoded virion protein.</title>
        <authorList>
            <person name="Huang Y."/>
            <person name="Zhao H."/>
            <person name="Luo Z."/>
            <person name="Chen X."/>
            <person name="Fang R.X."/>
        </authorList>
    </citation>
    <scope>NUCLEOTIDE SEQUENCE [GENOMIC RNA]</scope>
</reference>
<reference key="3">
    <citation type="journal article" date="2005" name="J. Virol.">
        <title>Identification of a movement protein of rice yellow stunt rhabdovirus.</title>
        <authorList>
            <person name="Huang Y.W."/>
            <person name="Geng Y.F."/>
            <person name="Ying X.B."/>
            <person name="Chen X.Y."/>
            <person name="Fang R.X."/>
        </authorList>
    </citation>
    <scope>INTERACTION WITH MOVEMENT PROTEIN</scope>
</reference>
<gene>
    <name type="primary">N</name>
</gene>
<dbReference type="EMBL" id="X75534">
    <property type="protein sequence ID" value="CAA53224.1"/>
    <property type="molecule type" value="mRNA"/>
</dbReference>
<dbReference type="EMBL" id="AB011257">
    <property type="protein sequence ID" value="BAA25154.1"/>
    <property type="molecule type" value="Genomic_RNA"/>
</dbReference>
<dbReference type="RefSeq" id="NP_620496.1">
    <property type="nucleotide sequence ID" value="NC_003746.1"/>
</dbReference>
<dbReference type="GeneID" id="944310"/>
<dbReference type="KEGG" id="vg:944310"/>
<dbReference type="OrthoDB" id="6784at10239"/>
<dbReference type="Proteomes" id="UP000002325">
    <property type="component" value="Genome"/>
</dbReference>
<dbReference type="GO" id="GO:0019029">
    <property type="term" value="C:helical viral capsid"/>
    <property type="evidence" value="ECO:0007669"/>
    <property type="project" value="UniProtKB-KW"/>
</dbReference>
<dbReference type="GO" id="GO:0030430">
    <property type="term" value="C:host cell cytoplasm"/>
    <property type="evidence" value="ECO:0007669"/>
    <property type="project" value="UniProtKB-SubCell"/>
</dbReference>
<dbReference type="GO" id="GO:1990904">
    <property type="term" value="C:ribonucleoprotein complex"/>
    <property type="evidence" value="ECO:0007669"/>
    <property type="project" value="UniProtKB-KW"/>
</dbReference>
<dbReference type="GO" id="GO:0019013">
    <property type="term" value="C:viral nucleocapsid"/>
    <property type="evidence" value="ECO:0007669"/>
    <property type="project" value="UniProtKB-KW"/>
</dbReference>
<dbReference type="GO" id="GO:0003723">
    <property type="term" value="F:RNA binding"/>
    <property type="evidence" value="ECO:0007669"/>
    <property type="project" value="UniProtKB-KW"/>
</dbReference>
<dbReference type="InterPro" id="IPR004902">
    <property type="entry name" value="Rhabdo_ncap_2"/>
</dbReference>
<dbReference type="Pfam" id="PF03216">
    <property type="entry name" value="Rhabdo_ncap_2"/>
    <property type="match status" value="1"/>
</dbReference>
<keyword id="KW-0167">Capsid protein</keyword>
<keyword id="KW-1139">Helical capsid protein</keyword>
<keyword id="KW-1035">Host cytoplasm</keyword>
<keyword id="KW-1185">Reference proteome</keyword>
<keyword id="KW-0687">Ribonucleoprotein</keyword>
<keyword id="KW-0694">RNA-binding</keyword>
<keyword id="KW-0766">Superantigen</keyword>
<keyword id="KW-0543">Viral nucleoprotein</keyword>
<keyword id="KW-0946">Virion</keyword>
<protein>
    <recommendedName>
        <fullName>Nucleoprotein</fullName>
        <shortName>NP</shortName>
    </recommendedName>
    <alternativeName>
        <fullName>Nucleocapsid protein</fullName>
        <shortName>Protein N</shortName>
    </alternativeName>
</protein>
<evidence type="ECO:0000250" key="1"/>
<evidence type="ECO:0000256" key="2">
    <source>
        <dbReference type="SAM" id="MobiDB-lite"/>
    </source>
</evidence>
<evidence type="ECO:0000305" key="3"/>